<dbReference type="EMBL" id="ACFL01000080">
    <property type="protein sequence ID" value="EEU07450.1"/>
    <property type="molecule type" value="Genomic_DNA"/>
</dbReference>
<dbReference type="SMR" id="C7GP31"/>
<dbReference type="Proteomes" id="UP000008073">
    <property type="component" value="Unassembled WGS sequence"/>
</dbReference>
<dbReference type="GO" id="GO:0005737">
    <property type="term" value="C:cytoplasm"/>
    <property type="evidence" value="ECO:0007669"/>
    <property type="project" value="UniProtKB-KW"/>
</dbReference>
<dbReference type="GO" id="GO:0005634">
    <property type="term" value="C:nucleus"/>
    <property type="evidence" value="ECO:0007669"/>
    <property type="project" value="UniProtKB-SubCell"/>
</dbReference>
<dbReference type="GO" id="GO:0005816">
    <property type="term" value="C:spindle pole body"/>
    <property type="evidence" value="ECO:0007669"/>
    <property type="project" value="UniProtKB-SubCell"/>
</dbReference>
<dbReference type="Gene3D" id="1.20.5.1180">
    <property type="entry name" value="Geminin coiled-coil domain"/>
    <property type="match status" value="1"/>
</dbReference>
<dbReference type="InterPro" id="IPR021611">
    <property type="entry name" value="Spc42"/>
</dbReference>
<dbReference type="Pfam" id="PF11544">
    <property type="entry name" value="Spc42p"/>
    <property type="match status" value="1"/>
</dbReference>
<organism>
    <name type="scientific">Saccharomyces cerevisiae (strain JAY291)</name>
    <name type="common">Baker's yeast</name>
    <dbReference type="NCBI Taxonomy" id="574961"/>
    <lineage>
        <taxon>Eukaryota</taxon>
        <taxon>Fungi</taxon>
        <taxon>Dikarya</taxon>
        <taxon>Ascomycota</taxon>
        <taxon>Saccharomycotina</taxon>
        <taxon>Saccharomycetes</taxon>
        <taxon>Saccharomycetales</taxon>
        <taxon>Saccharomycetaceae</taxon>
        <taxon>Saccharomyces</taxon>
    </lineage>
</organism>
<gene>
    <name type="primary">SPC42</name>
    <name type="ORF">C1Q_02039</name>
</gene>
<accession>C7GP31</accession>
<name>SPC42_YEAS2</name>
<protein>
    <recommendedName>
        <fullName>Spindle pole body component SPC42</fullName>
    </recommendedName>
</protein>
<keyword id="KW-0175">Coiled coil</keyword>
<keyword id="KW-0963">Cytoplasm</keyword>
<keyword id="KW-0206">Cytoskeleton</keyword>
<keyword id="KW-0539">Nucleus</keyword>
<keyword id="KW-0597">Phosphoprotein</keyword>
<sequence>MNGSPTPKRYSSKSSRLYDDYYNIPYQYSNPTPMNRDYNDVGSRINADKLVPEEYKRNTEFINKAVQQNKELNFKLREKQNEIFELKKIAETLRSKLEKYVDITKKLEDQNLNLQIKISDLEKKLSDANSTFKEMRFPKVKDPMVDDDPVSENYDQINVPKHRAPDATGNPRTTNKVSNTSDQDSRLKAIERTLSVLTNYVMRSEDGNNDRMSPLPSPLNTISPINNRLNFQEPKRYNPTVKVNPSDDDIMMYESAELKRVEEEIEELKRKILVRKKHDLRKLSLNNQLQELQSMMDGDDNIKLDNVSKHNHATHRHSSQSSRDYSPSSDACLECSNDLYEKNRVKPENNMSETFATPTPNNR</sequence>
<feature type="chain" id="PRO_0000409213" description="Spindle pole body component SPC42">
    <location>
        <begin position="1"/>
        <end position="363"/>
    </location>
</feature>
<feature type="region of interest" description="Disordered" evidence="4">
    <location>
        <begin position="160"/>
        <end position="184"/>
    </location>
</feature>
<feature type="region of interest" description="Disordered" evidence="4">
    <location>
        <begin position="310"/>
        <end position="363"/>
    </location>
</feature>
<feature type="coiled-coil region" evidence="3">
    <location>
        <begin position="62"/>
        <end position="136"/>
    </location>
</feature>
<feature type="coiled-coil region" evidence="3">
    <location>
        <begin position="248"/>
        <end position="297"/>
    </location>
</feature>
<feature type="compositionally biased region" description="Polar residues" evidence="4">
    <location>
        <begin position="170"/>
        <end position="182"/>
    </location>
</feature>
<feature type="compositionally biased region" description="Low complexity" evidence="4">
    <location>
        <begin position="319"/>
        <end position="329"/>
    </location>
</feature>
<feature type="compositionally biased region" description="Polar residues" evidence="4">
    <location>
        <begin position="349"/>
        <end position="363"/>
    </location>
</feature>
<feature type="modified residue" description="Phosphoserine" evidence="2">
    <location>
        <position position="213"/>
    </location>
</feature>
<feature type="modified residue" description="Phosphoserine" evidence="2">
    <location>
        <position position="217"/>
    </location>
</feature>
<feature type="modified residue" description="Phosphoserine" evidence="2">
    <location>
        <position position="284"/>
    </location>
</feature>
<feature type="modified residue" description="Phosphoserine" evidence="2">
    <location>
        <position position="329"/>
    </location>
</feature>
<evidence type="ECO:0000250" key="1"/>
<evidence type="ECO:0000250" key="2">
    <source>
        <dbReference type="UniProtKB" id="P36094"/>
    </source>
</evidence>
<evidence type="ECO:0000255" key="3"/>
<evidence type="ECO:0000256" key="4">
    <source>
        <dbReference type="SAM" id="MobiDB-lite"/>
    </source>
</evidence>
<evidence type="ECO:0000305" key="5"/>
<proteinExistence type="inferred from homology"/>
<reference key="1">
    <citation type="journal article" date="2009" name="Genome Res.">
        <title>Genome structure of a Saccharomyces cerevisiae strain widely used in bioethanol production.</title>
        <authorList>
            <person name="Argueso J.L."/>
            <person name="Carazzolle M.F."/>
            <person name="Mieczkowski P.A."/>
            <person name="Duarte F.M."/>
            <person name="Netto O.V.C."/>
            <person name="Missawa S.K."/>
            <person name="Galzerani F."/>
            <person name="Costa G.G.L."/>
            <person name="Vidal R.O."/>
            <person name="Noronha M.F."/>
            <person name="Dominska M."/>
            <person name="Andrietta M.G.S."/>
            <person name="Andrietta S.R."/>
            <person name="Cunha A.F."/>
            <person name="Gomes L.H."/>
            <person name="Tavares F.C.A."/>
            <person name="Alcarde A.R."/>
            <person name="Dietrich F.S."/>
            <person name="McCusker J.H."/>
            <person name="Petes T.D."/>
            <person name="Pereira G.A.G."/>
        </authorList>
    </citation>
    <scope>NUCLEOTIDE SEQUENCE [LARGE SCALE GENOMIC DNA]</scope>
    <source>
        <strain>JAY291</strain>
    </source>
</reference>
<comment type="function">
    <text evidence="1">Forms a polymeric layer at the periphery of the spindle pole body (SPB) central plaque which has an essential function during SPB duplication and may facilitate attachment of the SPB to the nuclear membrane.</text>
</comment>
<comment type="subunit">
    <text evidence="1">Component of the SPC110 complex containing at least CMD1, SPC29, SPC42 and SCP110.</text>
</comment>
<comment type="subcellular location">
    <subcellularLocation>
        <location evidence="1">Nucleus</location>
    </subcellularLocation>
    <subcellularLocation>
        <location evidence="1">Cytoplasm</location>
        <location evidence="1">Cytoskeleton</location>
        <location evidence="1">Microtubule organizing center</location>
        <location evidence="1">Spindle pole body</location>
    </subcellularLocation>
</comment>
<comment type="similarity">
    <text evidence="5">Belongs to the SPC42 family.</text>
</comment>